<feature type="chain" id="PRO_0000104436" description="Large ribosomal subunit protein uL11">
    <location>
        <begin position="1"/>
        <end position="166"/>
    </location>
</feature>
<sequence>MPKEEVEVLIEGGKADPGPPLGPALGPLGVNIQEVVEEINRKTKDFKGMEVPVKIIVDTETREFEVKVGSPPTSAIIKSELGIDKGAHEPRHETVGDLSMEQVIKIAKMKFDDLLSYDLKTAAKEILGTCGSMGVTVEGKDPKEVQKEIDEGKWDDLFEKYEEEEE</sequence>
<organism>
    <name type="scientific">Methanopyrus kandleri (strain AV19 / DSM 6324 / JCM 9639 / NBRC 100938)</name>
    <dbReference type="NCBI Taxonomy" id="190192"/>
    <lineage>
        <taxon>Archaea</taxon>
        <taxon>Methanobacteriati</taxon>
        <taxon>Methanobacteriota</taxon>
        <taxon>Methanomada group</taxon>
        <taxon>Methanopyri</taxon>
        <taxon>Methanopyrales</taxon>
        <taxon>Methanopyraceae</taxon>
        <taxon>Methanopyrus</taxon>
    </lineage>
</organism>
<gene>
    <name evidence="1" type="primary">rpl11</name>
    <name type="ordered locus">MK0824</name>
</gene>
<accession>Q8TX52</accession>
<comment type="function">
    <text evidence="1">Forms part of the ribosomal stalk which helps the ribosome interact with GTP-bound translation factors.</text>
</comment>
<comment type="subunit">
    <text evidence="1">Part of the ribosomal stalk of the 50S ribosomal subunit. Interacts with L10 and the large rRNA to form the base of the stalk. L10 forms an elongated spine to which L12 dimers bind in a sequential fashion forming a multimeric L10(L12)X complex.</text>
</comment>
<comment type="similarity">
    <text evidence="1">Belongs to the universal ribosomal protein uL11 family.</text>
</comment>
<protein>
    <recommendedName>
        <fullName evidence="1">Large ribosomal subunit protein uL11</fullName>
    </recommendedName>
    <alternativeName>
        <fullName evidence="2">50S ribosomal protein L11</fullName>
    </alternativeName>
</protein>
<reference key="1">
    <citation type="journal article" date="2002" name="Proc. Natl. Acad. Sci. U.S.A.">
        <title>The complete genome of hyperthermophile Methanopyrus kandleri AV19 and monophyly of archaeal methanogens.</title>
        <authorList>
            <person name="Slesarev A.I."/>
            <person name="Mezhevaya K.V."/>
            <person name="Makarova K.S."/>
            <person name="Polushin N.N."/>
            <person name="Shcherbinina O.V."/>
            <person name="Shakhova V.V."/>
            <person name="Belova G.I."/>
            <person name="Aravind L."/>
            <person name="Natale D.A."/>
            <person name="Rogozin I.B."/>
            <person name="Tatusov R.L."/>
            <person name="Wolf Y.I."/>
            <person name="Stetter K.O."/>
            <person name="Malykh A.G."/>
            <person name="Koonin E.V."/>
            <person name="Kozyavkin S.A."/>
        </authorList>
    </citation>
    <scope>NUCLEOTIDE SEQUENCE [LARGE SCALE GENOMIC DNA]</scope>
    <source>
        <strain>AV19 / DSM 6324 / JCM 9639 / NBRC 100938</strain>
    </source>
</reference>
<proteinExistence type="inferred from homology"/>
<evidence type="ECO:0000255" key="1">
    <source>
        <dbReference type="HAMAP-Rule" id="MF_00736"/>
    </source>
</evidence>
<evidence type="ECO:0000305" key="2"/>
<keyword id="KW-1185">Reference proteome</keyword>
<keyword id="KW-0687">Ribonucleoprotein</keyword>
<keyword id="KW-0689">Ribosomal protein</keyword>
<keyword id="KW-0694">RNA-binding</keyword>
<keyword id="KW-0699">rRNA-binding</keyword>
<dbReference type="EMBL" id="AE009439">
    <property type="protein sequence ID" value="AAM02037.1"/>
    <property type="molecule type" value="Genomic_DNA"/>
</dbReference>
<dbReference type="RefSeq" id="WP_011019192.1">
    <property type="nucleotide sequence ID" value="NC_003551.1"/>
</dbReference>
<dbReference type="SMR" id="Q8TX52"/>
<dbReference type="FunCoup" id="Q8TX52">
    <property type="interactions" value="158"/>
</dbReference>
<dbReference type="STRING" id="190192.MK0824"/>
<dbReference type="PaxDb" id="190192-MK0824"/>
<dbReference type="EnsemblBacteria" id="AAM02037">
    <property type="protein sequence ID" value="AAM02037"/>
    <property type="gene ID" value="MK0824"/>
</dbReference>
<dbReference type="GeneID" id="1476925"/>
<dbReference type="KEGG" id="mka:MK0824"/>
<dbReference type="PATRIC" id="fig|190192.8.peg.866"/>
<dbReference type="HOGENOM" id="CLU_074237_4_0_2"/>
<dbReference type="InParanoid" id="Q8TX52"/>
<dbReference type="OrthoDB" id="8842at2157"/>
<dbReference type="Proteomes" id="UP000001826">
    <property type="component" value="Chromosome"/>
</dbReference>
<dbReference type="GO" id="GO:0015934">
    <property type="term" value="C:large ribosomal subunit"/>
    <property type="evidence" value="ECO:0007669"/>
    <property type="project" value="TreeGrafter"/>
</dbReference>
<dbReference type="GO" id="GO:0070180">
    <property type="term" value="F:large ribosomal subunit rRNA binding"/>
    <property type="evidence" value="ECO:0007669"/>
    <property type="project" value="UniProtKB-UniRule"/>
</dbReference>
<dbReference type="GO" id="GO:0003735">
    <property type="term" value="F:structural constituent of ribosome"/>
    <property type="evidence" value="ECO:0007669"/>
    <property type="project" value="InterPro"/>
</dbReference>
<dbReference type="GO" id="GO:0006412">
    <property type="term" value="P:translation"/>
    <property type="evidence" value="ECO:0007669"/>
    <property type="project" value="UniProtKB-UniRule"/>
</dbReference>
<dbReference type="CDD" id="cd00349">
    <property type="entry name" value="Ribosomal_L11"/>
    <property type="match status" value="1"/>
</dbReference>
<dbReference type="FunFam" id="1.10.10.250:FF:000006">
    <property type="entry name" value="50S ribosomal protein L11"/>
    <property type="match status" value="1"/>
</dbReference>
<dbReference type="FunFam" id="3.30.1550.10:FF:000007">
    <property type="entry name" value="50S ribosomal protein L11"/>
    <property type="match status" value="1"/>
</dbReference>
<dbReference type="Gene3D" id="1.10.10.250">
    <property type="entry name" value="Ribosomal protein L11, C-terminal domain"/>
    <property type="match status" value="1"/>
</dbReference>
<dbReference type="Gene3D" id="3.30.1550.10">
    <property type="entry name" value="Ribosomal protein L11/L12, N-terminal domain"/>
    <property type="match status" value="1"/>
</dbReference>
<dbReference type="HAMAP" id="MF_00736">
    <property type="entry name" value="Ribosomal_uL11"/>
    <property type="match status" value="1"/>
</dbReference>
<dbReference type="InterPro" id="IPR000911">
    <property type="entry name" value="Ribosomal_uL11"/>
</dbReference>
<dbReference type="InterPro" id="IPR020783">
    <property type="entry name" value="Ribosomal_uL11_C"/>
</dbReference>
<dbReference type="InterPro" id="IPR036769">
    <property type="entry name" value="Ribosomal_uL11_C_sf"/>
</dbReference>
<dbReference type="InterPro" id="IPR020785">
    <property type="entry name" value="Ribosomal_uL11_CS"/>
</dbReference>
<dbReference type="InterPro" id="IPR020784">
    <property type="entry name" value="Ribosomal_uL11_N"/>
</dbReference>
<dbReference type="InterPro" id="IPR036796">
    <property type="entry name" value="Ribosomal_uL11_N_sf"/>
</dbReference>
<dbReference type="NCBIfam" id="NF002232">
    <property type="entry name" value="PRK01143.1"/>
    <property type="match status" value="1"/>
</dbReference>
<dbReference type="PANTHER" id="PTHR11661">
    <property type="entry name" value="60S RIBOSOMAL PROTEIN L12"/>
    <property type="match status" value="1"/>
</dbReference>
<dbReference type="PANTHER" id="PTHR11661:SF1">
    <property type="entry name" value="LARGE RIBOSOMAL SUBUNIT PROTEIN UL11M"/>
    <property type="match status" value="1"/>
</dbReference>
<dbReference type="Pfam" id="PF00298">
    <property type="entry name" value="Ribosomal_L11"/>
    <property type="match status" value="1"/>
</dbReference>
<dbReference type="Pfam" id="PF03946">
    <property type="entry name" value="Ribosomal_L11_N"/>
    <property type="match status" value="1"/>
</dbReference>
<dbReference type="SMART" id="SM00649">
    <property type="entry name" value="RL11"/>
    <property type="match status" value="1"/>
</dbReference>
<dbReference type="SUPFAM" id="SSF54747">
    <property type="entry name" value="Ribosomal L11/L12e N-terminal domain"/>
    <property type="match status" value="1"/>
</dbReference>
<dbReference type="SUPFAM" id="SSF46906">
    <property type="entry name" value="Ribosomal protein L11, C-terminal domain"/>
    <property type="match status" value="1"/>
</dbReference>
<dbReference type="PROSITE" id="PS00359">
    <property type="entry name" value="RIBOSOMAL_L11"/>
    <property type="match status" value="1"/>
</dbReference>
<name>RL11_METKA</name>